<geneLocation type="chloroplast"/>
<name>RR2_LOLPR</name>
<keyword id="KW-0150">Chloroplast</keyword>
<keyword id="KW-0934">Plastid</keyword>
<keyword id="KW-0687">Ribonucleoprotein</keyword>
<keyword id="KW-0689">Ribosomal protein</keyword>
<dbReference type="EMBL" id="AM777385">
    <property type="protein sequence ID" value="CAO85969.1"/>
    <property type="molecule type" value="Genomic_DNA"/>
</dbReference>
<dbReference type="RefSeq" id="YP_001531276.1">
    <property type="nucleotide sequence ID" value="NC_009950.1"/>
</dbReference>
<dbReference type="SMR" id="A8Y9G3"/>
<dbReference type="GeneID" id="5696611"/>
<dbReference type="KEGG" id="lper:5696611"/>
<dbReference type="GO" id="GO:0009507">
    <property type="term" value="C:chloroplast"/>
    <property type="evidence" value="ECO:0007669"/>
    <property type="project" value="UniProtKB-SubCell"/>
</dbReference>
<dbReference type="GO" id="GO:0005763">
    <property type="term" value="C:mitochondrial small ribosomal subunit"/>
    <property type="evidence" value="ECO:0007669"/>
    <property type="project" value="TreeGrafter"/>
</dbReference>
<dbReference type="GO" id="GO:0003735">
    <property type="term" value="F:structural constituent of ribosome"/>
    <property type="evidence" value="ECO:0007669"/>
    <property type="project" value="InterPro"/>
</dbReference>
<dbReference type="GO" id="GO:0006412">
    <property type="term" value="P:translation"/>
    <property type="evidence" value="ECO:0007669"/>
    <property type="project" value="UniProtKB-UniRule"/>
</dbReference>
<dbReference type="CDD" id="cd01425">
    <property type="entry name" value="RPS2"/>
    <property type="match status" value="1"/>
</dbReference>
<dbReference type="FunFam" id="1.10.287.610:FF:000001">
    <property type="entry name" value="30S ribosomal protein S2"/>
    <property type="match status" value="1"/>
</dbReference>
<dbReference type="Gene3D" id="3.40.50.10490">
    <property type="entry name" value="Glucose-6-phosphate isomerase like protein, domain 1"/>
    <property type="match status" value="1"/>
</dbReference>
<dbReference type="Gene3D" id="1.10.287.610">
    <property type="entry name" value="Helix hairpin bin"/>
    <property type="match status" value="1"/>
</dbReference>
<dbReference type="HAMAP" id="MF_00291_B">
    <property type="entry name" value="Ribosomal_uS2_B"/>
    <property type="match status" value="1"/>
</dbReference>
<dbReference type="InterPro" id="IPR001865">
    <property type="entry name" value="Ribosomal_uS2"/>
</dbReference>
<dbReference type="InterPro" id="IPR005706">
    <property type="entry name" value="Ribosomal_uS2_bac/mit/plastid"/>
</dbReference>
<dbReference type="InterPro" id="IPR018130">
    <property type="entry name" value="Ribosomal_uS2_CS"/>
</dbReference>
<dbReference type="InterPro" id="IPR023591">
    <property type="entry name" value="Ribosomal_uS2_flav_dom_sf"/>
</dbReference>
<dbReference type="NCBIfam" id="TIGR01011">
    <property type="entry name" value="rpsB_bact"/>
    <property type="match status" value="1"/>
</dbReference>
<dbReference type="PANTHER" id="PTHR12534">
    <property type="entry name" value="30S RIBOSOMAL PROTEIN S2 PROKARYOTIC AND ORGANELLAR"/>
    <property type="match status" value="1"/>
</dbReference>
<dbReference type="PANTHER" id="PTHR12534:SF0">
    <property type="entry name" value="SMALL RIBOSOMAL SUBUNIT PROTEIN US2M"/>
    <property type="match status" value="1"/>
</dbReference>
<dbReference type="Pfam" id="PF00318">
    <property type="entry name" value="Ribosomal_S2"/>
    <property type="match status" value="1"/>
</dbReference>
<dbReference type="PRINTS" id="PR00395">
    <property type="entry name" value="RIBOSOMALS2"/>
</dbReference>
<dbReference type="SUPFAM" id="SSF52313">
    <property type="entry name" value="Ribosomal protein S2"/>
    <property type="match status" value="1"/>
</dbReference>
<dbReference type="PROSITE" id="PS00962">
    <property type="entry name" value="RIBOSOMAL_S2_1"/>
    <property type="match status" value="1"/>
</dbReference>
<dbReference type="PROSITE" id="PS00963">
    <property type="entry name" value="RIBOSOMAL_S2_2"/>
    <property type="match status" value="1"/>
</dbReference>
<reference key="1">
    <citation type="submission" date="2007-07" db="EMBL/GenBank/DDBJ databases">
        <title>Complete chloroplast genome sequence of perennial ryegrass (Lolium perenne L.).</title>
        <authorList>
            <person name="Diekmann K."/>
            <person name="Hodkinson T.R."/>
            <person name="van den Bekerom R."/>
            <person name="Dix P.J."/>
            <person name="Wolfe K.H."/>
            <person name="Barth S."/>
        </authorList>
    </citation>
    <scope>NUCLEOTIDE SEQUENCE [LARGE SCALE GENOMIC DNA]</scope>
    <source>
        <strain>cv. Cashel</strain>
    </source>
</reference>
<proteinExistence type="inferred from homology"/>
<sequence>MTRRYWNINLKEMVEAGVHFGHGIKKWNPKMAPYISAKRKGTHIINLARTARFLSEACDLVFDAASQGKSFLIVGTKKRATDLVASAAIRARCHYVNKKWFSGMLTNWSITKTRLSQFRDLRAEEKMGKFQHLPKRDVAILKRKLSTLQRYLGGIKYMTRLPDIVIVLDQQKEYIALRECAILGIPTISLVDTNCDPDLANISIPANDDTMTSIRLILNKLVFAICEGHSLYIRNH</sequence>
<evidence type="ECO:0000305" key="1"/>
<feature type="chain" id="PRO_0000352129" description="Small ribosomal subunit protein uS2c">
    <location>
        <begin position="1"/>
        <end position="236"/>
    </location>
</feature>
<gene>
    <name type="primary">rps2</name>
    <name type="ordered locus">LopeCp026</name>
</gene>
<accession>A8Y9G3</accession>
<comment type="subcellular location">
    <subcellularLocation>
        <location>Plastid</location>
        <location>Chloroplast</location>
    </subcellularLocation>
</comment>
<comment type="similarity">
    <text evidence="1">Belongs to the universal ribosomal protein uS2 family.</text>
</comment>
<organism>
    <name type="scientific">Lolium perenne</name>
    <name type="common">Perennial ryegrass</name>
    <dbReference type="NCBI Taxonomy" id="4522"/>
    <lineage>
        <taxon>Eukaryota</taxon>
        <taxon>Viridiplantae</taxon>
        <taxon>Streptophyta</taxon>
        <taxon>Embryophyta</taxon>
        <taxon>Tracheophyta</taxon>
        <taxon>Spermatophyta</taxon>
        <taxon>Magnoliopsida</taxon>
        <taxon>Liliopsida</taxon>
        <taxon>Poales</taxon>
        <taxon>Poaceae</taxon>
        <taxon>BOP clade</taxon>
        <taxon>Pooideae</taxon>
        <taxon>Poodae</taxon>
        <taxon>Poeae</taxon>
        <taxon>Poeae Chloroplast Group 2 (Poeae type)</taxon>
        <taxon>Loliodinae</taxon>
        <taxon>Loliinae</taxon>
        <taxon>Lolium</taxon>
    </lineage>
</organism>
<protein>
    <recommendedName>
        <fullName evidence="1">Small ribosomal subunit protein uS2c</fullName>
    </recommendedName>
    <alternativeName>
        <fullName>30S ribosomal protein S2, chloroplastic</fullName>
    </alternativeName>
</protein>